<sequence>MRSSSPSQPPSIKKAHRQAKKRAIRRRRIDLDCGCSIYFHIDCAGHGFTHRGAHHCTSGREWRVYLGDRKSPLFQDKPSRGHAIHQDQDIQRPNPVQPQPQESIGSPQSIPELPSLDDIDDSFWVELFS</sequence>
<feature type="chain" id="PRO_0000222228" description="Transcriptional activator protein">
    <location>
        <begin position="1"/>
        <end position="129"/>
    </location>
</feature>
<feature type="zinc finger region" evidence="1">
    <location>
        <begin position="33"/>
        <end position="50"/>
    </location>
</feature>
<feature type="region of interest" description="Disordered" evidence="2">
    <location>
        <begin position="1"/>
        <end position="23"/>
    </location>
</feature>
<feature type="region of interest" description="Disordered" evidence="2">
    <location>
        <begin position="73"/>
        <end position="117"/>
    </location>
</feature>
<feature type="region of interest" description="Transactivation" evidence="1">
    <location>
        <begin position="115"/>
        <end position="129"/>
    </location>
</feature>
<feature type="short sequence motif" description="Nuclear localization signal" evidence="1">
    <location>
        <begin position="13"/>
        <end position="28"/>
    </location>
</feature>
<feature type="compositionally biased region" description="Low complexity" evidence="2">
    <location>
        <begin position="1"/>
        <end position="12"/>
    </location>
</feature>
<feature type="compositionally biased region" description="Basic residues" evidence="2">
    <location>
        <begin position="13"/>
        <end position="23"/>
    </location>
</feature>
<feature type="compositionally biased region" description="Polar residues" evidence="2">
    <location>
        <begin position="99"/>
        <end position="109"/>
    </location>
</feature>
<reference key="1">
    <citation type="journal article" date="1991" name="J. Gen. Virol.">
        <title>The nucleotide sequence of the infectious cloned DNA components of potato yellow mosaic virus.</title>
        <authorList>
            <person name="Coutts R.H.A."/>
            <person name="Coffin R.S."/>
            <person name="Roberts E.J.F."/>
            <person name="Hamilton W.D.O."/>
        </authorList>
    </citation>
    <scope>NUCLEOTIDE SEQUENCE [GENOMIC DNA]</scope>
</reference>
<proteinExistence type="inferred from homology"/>
<evidence type="ECO:0000250" key="1"/>
<evidence type="ECO:0000256" key="2">
    <source>
        <dbReference type="SAM" id="MobiDB-lite"/>
    </source>
</evidence>
<evidence type="ECO:0000305" key="3"/>
<organismHost>
    <name type="scientific">Solanum tuberosum</name>
    <name type="common">Potato</name>
    <dbReference type="NCBI Taxonomy" id="4113"/>
</organismHost>
<keyword id="KW-0010">Activator</keyword>
<keyword id="KW-0238">DNA-binding</keyword>
<keyword id="KW-1035">Host cytoplasm</keyword>
<keyword id="KW-1048">Host nucleus</keyword>
<keyword id="KW-0945">Host-virus interaction</keyword>
<keyword id="KW-1090">Inhibition of host innate immune response by virus</keyword>
<keyword id="KW-0479">Metal-binding</keyword>
<keyword id="KW-0597">Phosphoprotein</keyword>
<keyword id="KW-1185">Reference proteome</keyword>
<keyword id="KW-0941">Suppressor of RNA silencing</keyword>
<keyword id="KW-0899">Viral immunoevasion</keyword>
<keyword id="KW-0862">Zinc</keyword>
<keyword id="KW-0863">Zinc-finger</keyword>
<comment type="function">
    <text evidence="1">Strong activator of the late viral genes promoters. Enhances the expression of the capsid protein and nuclear shuttle protein. Acts as a suppressor of RNA-mediated gene silencing, also known as post-transcriptional gene silencing (PTGS), a mechanism of plant viral defense that limits the accumulation of viral RNAs. Suppresses the host RNA silencing by inhibiting adenosine kinase 2 (ADK2), a kinase involved in a general methylation pathway. Also suppresses the host basal defense by interacting with and inhibiting SNF1 kinase, a key regulator of cell metabolism implicated in innate antiviral defense. Determines pathogenicity (By similarity).</text>
</comment>
<comment type="subunit">
    <text evidence="1">Monomer. Homodimer. Homooligomer. Self-interaction correlates with nuclear localization and efficient activation of transcription. Monomers suppress local silencing by interacting with and inactivating host adenosine kinase 2 (ADK2) in the cytoplasm. Interacts with and inhibits host SNF1 kinase. Binds to ssDNA (By similarity).</text>
</comment>
<comment type="subcellular location">
    <subcellularLocation>
        <location evidence="1">Host nucleus</location>
    </subcellularLocation>
    <subcellularLocation>
        <location evidence="1">Host cytoplasm</location>
    </subcellularLocation>
    <text evidence="1">The phosphorylated form appears to accumulate almost exclusively in the nucleus, whereas the non-phosphorylated form is found in both nucleus and cytoplasm.</text>
</comment>
<comment type="domain">
    <text evidence="1">The zinc finger and the transactivation region are involved in PTGS suppression.</text>
</comment>
<comment type="PTM">
    <text evidence="1">Phosphorylated.</text>
</comment>
<comment type="similarity">
    <text evidence="3">Belongs to the geminiviridae transcriptional activator protein family.</text>
</comment>
<accession>P27261</accession>
<name>TRAP_PYMVV</name>
<protein>
    <recommendedName>
        <fullName>Transcriptional activator protein</fullName>
        <shortName>TrAP</shortName>
    </recommendedName>
    <alternativeName>
        <fullName>Protein AC2</fullName>
    </alternativeName>
    <alternativeName>
        <fullName>Protein AL2</fullName>
    </alternativeName>
</protein>
<organism>
    <name type="scientific">Potato yellow mosaic virus (isolate Venezuela)</name>
    <name type="common">PYMV</name>
    <dbReference type="NCBI Taxonomy" id="223310"/>
    <lineage>
        <taxon>Viruses</taxon>
        <taxon>Monodnaviria</taxon>
        <taxon>Shotokuvirae</taxon>
        <taxon>Cressdnaviricota</taxon>
        <taxon>Repensiviricetes</taxon>
        <taxon>Geplafuvirales</taxon>
        <taxon>Geminiviridae</taxon>
        <taxon>Begomovirus</taxon>
        <taxon>Potato yellow mosaic virus</taxon>
    </lineage>
</organism>
<gene>
    <name type="ORF">AC2</name>
    <name type="ORF">AL2</name>
</gene>
<dbReference type="EMBL" id="D00940">
    <property type="protein sequence ID" value="BAA00781.1"/>
    <property type="molecule type" value="Genomic_DNA"/>
</dbReference>
<dbReference type="PIR" id="JU0365">
    <property type="entry name" value="QQCVP4"/>
</dbReference>
<dbReference type="RefSeq" id="NP_047240.1">
    <property type="nucleotide sequence ID" value="NC_001934.1"/>
</dbReference>
<dbReference type="GeneID" id="956390"/>
<dbReference type="KEGG" id="vg:956390"/>
<dbReference type="Proteomes" id="UP000006828">
    <property type="component" value="Genome"/>
</dbReference>
<dbReference type="GO" id="GO:0030430">
    <property type="term" value="C:host cell cytoplasm"/>
    <property type="evidence" value="ECO:0007669"/>
    <property type="project" value="UniProtKB-SubCell"/>
</dbReference>
<dbReference type="GO" id="GO:0042025">
    <property type="term" value="C:host cell nucleus"/>
    <property type="evidence" value="ECO:0007669"/>
    <property type="project" value="UniProtKB-SubCell"/>
</dbReference>
<dbReference type="GO" id="GO:0019028">
    <property type="term" value="C:viral capsid"/>
    <property type="evidence" value="ECO:0007669"/>
    <property type="project" value="InterPro"/>
</dbReference>
<dbReference type="GO" id="GO:0003677">
    <property type="term" value="F:DNA binding"/>
    <property type="evidence" value="ECO:0007669"/>
    <property type="project" value="UniProtKB-KW"/>
</dbReference>
<dbReference type="GO" id="GO:0005198">
    <property type="term" value="F:structural molecule activity"/>
    <property type="evidence" value="ECO:0007669"/>
    <property type="project" value="InterPro"/>
</dbReference>
<dbReference type="GO" id="GO:0008270">
    <property type="term" value="F:zinc ion binding"/>
    <property type="evidence" value="ECO:0007669"/>
    <property type="project" value="UniProtKB-KW"/>
</dbReference>
<dbReference type="GO" id="GO:0052170">
    <property type="term" value="P:symbiont-mediated suppression of host innate immune response"/>
    <property type="evidence" value="ECO:0007669"/>
    <property type="project" value="UniProtKB-KW"/>
</dbReference>
<dbReference type="InterPro" id="IPR000942">
    <property type="entry name" value="Gemini_AL2"/>
</dbReference>
<dbReference type="Pfam" id="PF01440">
    <property type="entry name" value="Gemini_AL2"/>
    <property type="match status" value="1"/>
</dbReference>
<dbReference type="PRINTS" id="PR00230">
    <property type="entry name" value="GEMCOATAL2"/>
</dbReference>